<accession>Q662I5</accession>
<proteinExistence type="inferred from homology"/>
<keyword id="KW-0963">Cytoplasm</keyword>
<keyword id="KW-0342">GTP-binding</keyword>
<keyword id="KW-0378">Hydrolase</keyword>
<keyword id="KW-0460">Magnesium</keyword>
<keyword id="KW-0479">Metal-binding</keyword>
<keyword id="KW-0547">Nucleotide-binding</keyword>
<keyword id="KW-0630">Potassium</keyword>
<keyword id="KW-0819">tRNA processing</keyword>
<sequence length="464" mass="51554">MSNLFQRDDDIVALATPFLSSALCVIRSSGASSIPKFSKIFSNHSALNSAPGNTIHYGYILDNENNCKVDEVVVCLYRAPKSFTGQDSIEVIAHGSVIGIKKIIDLFLKSGFRMAEPGEFTLRSFLAKKIALTKAEALHEIIFATTNKTYSLAVTPLSGALFANLDAIQRCLLNILSAVSAYLDYEVDDHEISIPFDLILNSKAELKKLINSYKVYEKIDHGVTLVLAGSVNAGKSSLFNMFLKKDRSIVSSYPGTTRDYIEATFELDGILFNLFDTAGLKDADNFVERLGIEKSNSLIKEASLVIYVIDVSSNLPREDFLFIDSNKSNSKILFVLNKIDLNINKSTEEFVRSSVLNSSNLIMISTKNLEGIDILYDKIKTLISYERVEIGLDDIIISSSRQMQLLEKAYALVLDLLNKIDRQVSYDMLAFDAYEIINCLGEITGEVSSEDVLDNMFKNFCLGK</sequence>
<evidence type="ECO:0000255" key="1">
    <source>
        <dbReference type="HAMAP-Rule" id="MF_00379"/>
    </source>
</evidence>
<protein>
    <recommendedName>
        <fullName evidence="1">tRNA modification GTPase MnmE</fullName>
        <ecNumber evidence="1">3.6.-.-</ecNumber>
    </recommendedName>
</protein>
<dbReference type="EC" id="3.6.-.-" evidence="1"/>
<dbReference type="EMBL" id="CP000013">
    <property type="protein sequence ID" value="AAU07036.1"/>
    <property type="molecule type" value="Genomic_DNA"/>
</dbReference>
<dbReference type="RefSeq" id="WP_011193527.1">
    <property type="nucleotide sequence ID" value="NC_006156.1"/>
</dbReference>
<dbReference type="SMR" id="Q662I5"/>
<dbReference type="GeneID" id="45160971"/>
<dbReference type="KEGG" id="bga:BG0178"/>
<dbReference type="eggNOG" id="COG0486">
    <property type="taxonomic scope" value="Bacteria"/>
</dbReference>
<dbReference type="HOGENOM" id="CLU_019624_4_1_12"/>
<dbReference type="OrthoDB" id="9805918at2"/>
<dbReference type="Proteomes" id="UP000002276">
    <property type="component" value="Chromosome"/>
</dbReference>
<dbReference type="GO" id="GO:0005829">
    <property type="term" value="C:cytosol"/>
    <property type="evidence" value="ECO:0007669"/>
    <property type="project" value="TreeGrafter"/>
</dbReference>
<dbReference type="GO" id="GO:0005525">
    <property type="term" value="F:GTP binding"/>
    <property type="evidence" value="ECO:0007669"/>
    <property type="project" value="UniProtKB-UniRule"/>
</dbReference>
<dbReference type="GO" id="GO:0003924">
    <property type="term" value="F:GTPase activity"/>
    <property type="evidence" value="ECO:0007669"/>
    <property type="project" value="UniProtKB-UniRule"/>
</dbReference>
<dbReference type="GO" id="GO:0046872">
    <property type="term" value="F:metal ion binding"/>
    <property type="evidence" value="ECO:0007669"/>
    <property type="project" value="UniProtKB-KW"/>
</dbReference>
<dbReference type="GO" id="GO:0030488">
    <property type="term" value="P:tRNA methylation"/>
    <property type="evidence" value="ECO:0007669"/>
    <property type="project" value="TreeGrafter"/>
</dbReference>
<dbReference type="GO" id="GO:0002098">
    <property type="term" value="P:tRNA wobble uridine modification"/>
    <property type="evidence" value="ECO:0007669"/>
    <property type="project" value="TreeGrafter"/>
</dbReference>
<dbReference type="CDD" id="cd04164">
    <property type="entry name" value="trmE"/>
    <property type="match status" value="1"/>
</dbReference>
<dbReference type="CDD" id="cd14858">
    <property type="entry name" value="TrmE_N"/>
    <property type="match status" value="1"/>
</dbReference>
<dbReference type="Gene3D" id="3.40.50.300">
    <property type="entry name" value="P-loop containing nucleotide triphosphate hydrolases"/>
    <property type="match status" value="1"/>
</dbReference>
<dbReference type="Gene3D" id="3.30.1360.120">
    <property type="entry name" value="Probable tRNA modification gtpase trme, domain 1"/>
    <property type="match status" value="1"/>
</dbReference>
<dbReference type="Gene3D" id="1.20.120.430">
    <property type="entry name" value="tRNA modification GTPase MnmE domain 2"/>
    <property type="match status" value="1"/>
</dbReference>
<dbReference type="HAMAP" id="MF_00379">
    <property type="entry name" value="GTPase_MnmE"/>
    <property type="match status" value="1"/>
</dbReference>
<dbReference type="InterPro" id="IPR031168">
    <property type="entry name" value="G_TrmE"/>
</dbReference>
<dbReference type="InterPro" id="IPR006073">
    <property type="entry name" value="GTP-bd"/>
</dbReference>
<dbReference type="InterPro" id="IPR018948">
    <property type="entry name" value="GTP-bd_TrmE_N"/>
</dbReference>
<dbReference type="InterPro" id="IPR004520">
    <property type="entry name" value="GTPase_MnmE"/>
</dbReference>
<dbReference type="InterPro" id="IPR027368">
    <property type="entry name" value="MnmE_dom2"/>
</dbReference>
<dbReference type="InterPro" id="IPR025867">
    <property type="entry name" value="MnmE_helical"/>
</dbReference>
<dbReference type="InterPro" id="IPR027417">
    <property type="entry name" value="P-loop_NTPase"/>
</dbReference>
<dbReference type="InterPro" id="IPR005225">
    <property type="entry name" value="Small_GTP-bd"/>
</dbReference>
<dbReference type="InterPro" id="IPR027266">
    <property type="entry name" value="TrmE/GcvT_dom1"/>
</dbReference>
<dbReference type="NCBIfam" id="TIGR00450">
    <property type="entry name" value="mnmE_trmE_thdF"/>
    <property type="match status" value="1"/>
</dbReference>
<dbReference type="NCBIfam" id="TIGR00231">
    <property type="entry name" value="small_GTP"/>
    <property type="match status" value="1"/>
</dbReference>
<dbReference type="PANTHER" id="PTHR42714">
    <property type="entry name" value="TRNA MODIFICATION GTPASE GTPBP3"/>
    <property type="match status" value="1"/>
</dbReference>
<dbReference type="PANTHER" id="PTHR42714:SF2">
    <property type="entry name" value="TRNA MODIFICATION GTPASE GTPBP3, MITOCHONDRIAL"/>
    <property type="match status" value="1"/>
</dbReference>
<dbReference type="Pfam" id="PF01926">
    <property type="entry name" value="MMR_HSR1"/>
    <property type="match status" value="1"/>
</dbReference>
<dbReference type="Pfam" id="PF12631">
    <property type="entry name" value="MnmE_helical"/>
    <property type="match status" value="1"/>
</dbReference>
<dbReference type="Pfam" id="PF10396">
    <property type="entry name" value="TrmE_N"/>
    <property type="match status" value="1"/>
</dbReference>
<dbReference type="SUPFAM" id="SSF52540">
    <property type="entry name" value="P-loop containing nucleoside triphosphate hydrolases"/>
    <property type="match status" value="1"/>
</dbReference>
<dbReference type="PROSITE" id="PS51709">
    <property type="entry name" value="G_TRME"/>
    <property type="match status" value="1"/>
</dbReference>
<name>MNME_BORGP</name>
<comment type="function">
    <text evidence="1">Exhibits a very high intrinsic GTPase hydrolysis rate. Involved in the addition of a carboxymethylaminomethyl (cmnm) group at the wobble position (U34) of certain tRNAs, forming tRNA-cmnm(5)s(2)U34.</text>
</comment>
<comment type="cofactor">
    <cofactor evidence="1">
        <name>K(+)</name>
        <dbReference type="ChEBI" id="CHEBI:29103"/>
    </cofactor>
    <text evidence="1">Binds 1 potassium ion per subunit.</text>
</comment>
<comment type="subunit">
    <text evidence="1">Homodimer. Heterotetramer of two MnmE and two MnmG subunits.</text>
</comment>
<comment type="subcellular location">
    <subcellularLocation>
        <location evidence="1">Cytoplasm</location>
    </subcellularLocation>
</comment>
<comment type="similarity">
    <text evidence="1">Belongs to the TRAFAC class TrmE-Era-EngA-EngB-Septin-like GTPase superfamily. TrmE GTPase family.</text>
</comment>
<feature type="chain" id="PRO_0000345723" description="tRNA modification GTPase MnmE">
    <location>
        <begin position="1"/>
        <end position="464"/>
    </location>
</feature>
<feature type="domain" description="TrmE-type G">
    <location>
        <begin position="222"/>
        <end position="384"/>
    </location>
</feature>
<feature type="binding site" evidence="1">
    <location>
        <position position="27"/>
    </location>
    <ligand>
        <name>(6S)-5-formyl-5,6,7,8-tetrahydrofolate</name>
        <dbReference type="ChEBI" id="CHEBI:57457"/>
    </ligand>
</feature>
<feature type="binding site" evidence="1">
    <location>
        <position position="90"/>
    </location>
    <ligand>
        <name>(6S)-5-formyl-5,6,7,8-tetrahydrofolate</name>
        <dbReference type="ChEBI" id="CHEBI:57457"/>
    </ligand>
</feature>
<feature type="binding site" evidence="1">
    <location>
        <position position="129"/>
    </location>
    <ligand>
        <name>(6S)-5-formyl-5,6,7,8-tetrahydrofolate</name>
        <dbReference type="ChEBI" id="CHEBI:57457"/>
    </ligand>
</feature>
<feature type="binding site" evidence="1">
    <location>
        <begin position="232"/>
        <end position="237"/>
    </location>
    <ligand>
        <name>GTP</name>
        <dbReference type="ChEBI" id="CHEBI:37565"/>
    </ligand>
</feature>
<feature type="binding site" evidence="1">
    <location>
        <position position="236"/>
    </location>
    <ligand>
        <name>Mg(2+)</name>
        <dbReference type="ChEBI" id="CHEBI:18420"/>
    </ligand>
</feature>
<feature type="binding site" evidence="1">
    <location>
        <begin position="251"/>
        <end position="257"/>
    </location>
    <ligand>
        <name>GTP</name>
        <dbReference type="ChEBI" id="CHEBI:37565"/>
    </ligand>
</feature>
<feature type="binding site" evidence="1">
    <location>
        <position position="257"/>
    </location>
    <ligand>
        <name>Mg(2+)</name>
        <dbReference type="ChEBI" id="CHEBI:18420"/>
    </ligand>
</feature>
<feature type="binding site" evidence="1">
    <location>
        <begin position="276"/>
        <end position="279"/>
    </location>
    <ligand>
        <name>GTP</name>
        <dbReference type="ChEBI" id="CHEBI:37565"/>
    </ligand>
</feature>
<feature type="binding site" evidence="1">
    <location>
        <position position="464"/>
    </location>
    <ligand>
        <name>(6S)-5-formyl-5,6,7,8-tetrahydrofolate</name>
        <dbReference type="ChEBI" id="CHEBI:57457"/>
    </ligand>
</feature>
<organism>
    <name type="scientific">Borrelia garinii subsp. bavariensis (strain ATCC BAA-2496 / DSM 23469 / PBi)</name>
    <name type="common">Borreliella bavariensis</name>
    <dbReference type="NCBI Taxonomy" id="290434"/>
    <lineage>
        <taxon>Bacteria</taxon>
        <taxon>Pseudomonadati</taxon>
        <taxon>Spirochaetota</taxon>
        <taxon>Spirochaetia</taxon>
        <taxon>Spirochaetales</taxon>
        <taxon>Borreliaceae</taxon>
        <taxon>Borreliella</taxon>
    </lineage>
</organism>
<reference key="1">
    <citation type="journal article" date="2004" name="Nucleic Acids Res.">
        <title>Comparative analysis of the Borrelia garinii genome.</title>
        <authorList>
            <person name="Gloeckner G."/>
            <person name="Lehmann R."/>
            <person name="Romualdi A."/>
            <person name="Pradella S."/>
            <person name="Schulte-Spechtel U."/>
            <person name="Schilhabel M."/>
            <person name="Wilske B."/>
            <person name="Suehnel J."/>
            <person name="Platzer M."/>
        </authorList>
    </citation>
    <scope>NUCLEOTIDE SEQUENCE [LARGE SCALE GENOMIC DNA]</scope>
    <source>
        <strain>ATCC BAA-2496 / DSM 23469 / PBi</strain>
    </source>
</reference>
<gene>
    <name evidence="1" type="primary">mnmE</name>
    <name evidence="1" type="synonym">trmE</name>
    <name type="ordered locus">BG0178</name>
</gene>